<name>NDK_CAMJR</name>
<evidence type="ECO:0000255" key="1">
    <source>
        <dbReference type="HAMAP-Rule" id="MF_00451"/>
    </source>
</evidence>
<sequence>MEKTLSIIKPDAVKKGVIGKILDRFESNGLRIAAMKKVQLSKEQAENFYAVHKERPFFKDLVEFMISGPVVVSVLEGEGAVLKNRDLMGATNPKEAKAGTIRADFAESIDANAVHGSDSLENAKIEIDFFFKPNEIC</sequence>
<gene>
    <name evidence="1" type="primary">ndk</name>
    <name type="ordered locus">CJE0377</name>
</gene>
<keyword id="KW-0067">ATP-binding</keyword>
<keyword id="KW-0963">Cytoplasm</keyword>
<keyword id="KW-0418">Kinase</keyword>
<keyword id="KW-0460">Magnesium</keyword>
<keyword id="KW-0479">Metal-binding</keyword>
<keyword id="KW-0546">Nucleotide metabolism</keyword>
<keyword id="KW-0547">Nucleotide-binding</keyword>
<keyword id="KW-0597">Phosphoprotein</keyword>
<keyword id="KW-0808">Transferase</keyword>
<accession>Q5HWD9</accession>
<comment type="function">
    <text evidence="1">Major role in the synthesis of nucleoside triphosphates other than ATP. The ATP gamma phosphate is transferred to the NDP beta phosphate via a ping-pong mechanism, using a phosphorylated active-site intermediate.</text>
</comment>
<comment type="catalytic activity">
    <reaction evidence="1">
        <text>a 2'-deoxyribonucleoside 5'-diphosphate + ATP = a 2'-deoxyribonucleoside 5'-triphosphate + ADP</text>
        <dbReference type="Rhea" id="RHEA:44640"/>
        <dbReference type="ChEBI" id="CHEBI:30616"/>
        <dbReference type="ChEBI" id="CHEBI:61560"/>
        <dbReference type="ChEBI" id="CHEBI:73316"/>
        <dbReference type="ChEBI" id="CHEBI:456216"/>
        <dbReference type="EC" id="2.7.4.6"/>
    </reaction>
</comment>
<comment type="catalytic activity">
    <reaction evidence="1">
        <text>a ribonucleoside 5'-diphosphate + ATP = a ribonucleoside 5'-triphosphate + ADP</text>
        <dbReference type="Rhea" id="RHEA:18113"/>
        <dbReference type="ChEBI" id="CHEBI:30616"/>
        <dbReference type="ChEBI" id="CHEBI:57930"/>
        <dbReference type="ChEBI" id="CHEBI:61557"/>
        <dbReference type="ChEBI" id="CHEBI:456216"/>
        <dbReference type="EC" id="2.7.4.6"/>
    </reaction>
</comment>
<comment type="cofactor">
    <cofactor evidence="1">
        <name>Mg(2+)</name>
        <dbReference type="ChEBI" id="CHEBI:18420"/>
    </cofactor>
</comment>
<comment type="subunit">
    <text evidence="1">Homotetramer.</text>
</comment>
<comment type="subcellular location">
    <subcellularLocation>
        <location evidence="1">Cytoplasm</location>
    </subcellularLocation>
</comment>
<comment type="similarity">
    <text evidence="1">Belongs to the NDK family.</text>
</comment>
<organism>
    <name type="scientific">Campylobacter jejuni (strain RM1221)</name>
    <dbReference type="NCBI Taxonomy" id="195099"/>
    <lineage>
        <taxon>Bacteria</taxon>
        <taxon>Pseudomonadati</taxon>
        <taxon>Campylobacterota</taxon>
        <taxon>Epsilonproteobacteria</taxon>
        <taxon>Campylobacterales</taxon>
        <taxon>Campylobacteraceae</taxon>
        <taxon>Campylobacter</taxon>
    </lineage>
</organism>
<dbReference type="EC" id="2.7.4.6" evidence="1"/>
<dbReference type="EMBL" id="CP000025">
    <property type="protein sequence ID" value="AAW34966.1"/>
    <property type="molecule type" value="Genomic_DNA"/>
</dbReference>
<dbReference type="RefSeq" id="WP_002854376.1">
    <property type="nucleotide sequence ID" value="NC_003912.7"/>
</dbReference>
<dbReference type="SMR" id="Q5HWD9"/>
<dbReference type="KEGG" id="cjr:CJE0377"/>
<dbReference type="HOGENOM" id="CLU_060216_8_1_7"/>
<dbReference type="GO" id="GO:0005737">
    <property type="term" value="C:cytoplasm"/>
    <property type="evidence" value="ECO:0007669"/>
    <property type="project" value="UniProtKB-SubCell"/>
</dbReference>
<dbReference type="GO" id="GO:0005524">
    <property type="term" value="F:ATP binding"/>
    <property type="evidence" value="ECO:0007669"/>
    <property type="project" value="UniProtKB-UniRule"/>
</dbReference>
<dbReference type="GO" id="GO:0046872">
    <property type="term" value="F:metal ion binding"/>
    <property type="evidence" value="ECO:0007669"/>
    <property type="project" value="UniProtKB-KW"/>
</dbReference>
<dbReference type="GO" id="GO:0004550">
    <property type="term" value="F:nucleoside diphosphate kinase activity"/>
    <property type="evidence" value="ECO:0007669"/>
    <property type="project" value="UniProtKB-UniRule"/>
</dbReference>
<dbReference type="GO" id="GO:0006241">
    <property type="term" value="P:CTP biosynthetic process"/>
    <property type="evidence" value="ECO:0007669"/>
    <property type="project" value="UniProtKB-UniRule"/>
</dbReference>
<dbReference type="GO" id="GO:0006183">
    <property type="term" value="P:GTP biosynthetic process"/>
    <property type="evidence" value="ECO:0007669"/>
    <property type="project" value="UniProtKB-UniRule"/>
</dbReference>
<dbReference type="GO" id="GO:0006228">
    <property type="term" value="P:UTP biosynthetic process"/>
    <property type="evidence" value="ECO:0007669"/>
    <property type="project" value="UniProtKB-UniRule"/>
</dbReference>
<dbReference type="CDD" id="cd04413">
    <property type="entry name" value="NDPk_I"/>
    <property type="match status" value="1"/>
</dbReference>
<dbReference type="FunFam" id="3.30.70.141:FF:000001">
    <property type="entry name" value="Nucleoside diphosphate kinase"/>
    <property type="match status" value="1"/>
</dbReference>
<dbReference type="Gene3D" id="3.30.70.141">
    <property type="entry name" value="Nucleoside diphosphate kinase-like domain"/>
    <property type="match status" value="1"/>
</dbReference>
<dbReference type="HAMAP" id="MF_00451">
    <property type="entry name" value="NDP_kinase"/>
    <property type="match status" value="1"/>
</dbReference>
<dbReference type="InterPro" id="IPR034907">
    <property type="entry name" value="NDK-like_dom"/>
</dbReference>
<dbReference type="InterPro" id="IPR036850">
    <property type="entry name" value="NDK-like_dom_sf"/>
</dbReference>
<dbReference type="InterPro" id="IPR001564">
    <property type="entry name" value="Nucleoside_diP_kinase"/>
</dbReference>
<dbReference type="InterPro" id="IPR023005">
    <property type="entry name" value="Nucleoside_diP_kinase_AS"/>
</dbReference>
<dbReference type="NCBIfam" id="NF001908">
    <property type="entry name" value="PRK00668.1"/>
    <property type="match status" value="1"/>
</dbReference>
<dbReference type="PANTHER" id="PTHR46161">
    <property type="entry name" value="NUCLEOSIDE DIPHOSPHATE KINASE"/>
    <property type="match status" value="1"/>
</dbReference>
<dbReference type="PANTHER" id="PTHR46161:SF3">
    <property type="entry name" value="NUCLEOSIDE DIPHOSPHATE KINASE DDB_G0292928-RELATED"/>
    <property type="match status" value="1"/>
</dbReference>
<dbReference type="Pfam" id="PF00334">
    <property type="entry name" value="NDK"/>
    <property type="match status" value="1"/>
</dbReference>
<dbReference type="PRINTS" id="PR01243">
    <property type="entry name" value="NUCDPKINASE"/>
</dbReference>
<dbReference type="SMART" id="SM00562">
    <property type="entry name" value="NDK"/>
    <property type="match status" value="1"/>
</dbReference>
<dbReference type="SUPFAM" id="SSF54919">
    <property type="entry name" value="Nucleoside diphosphate kinase, NDK"/>
    <property type="match status" value="1"/>
</dbReference>
<dbReference type="PROSITE" id="PS00469">
    <property type="entry name" value="NDPK"/>
    <property type="match status" value="1"/>
</dbReference>
<dbReference type="PROSITE" id="PS51374">
    <property type="entry name" value="NDPK_LIKE"/>
    <property type="match status" value="1"/>
</dbReference>
<proteinExistence type="inferred from homology"/>
<protein>
    <recommendedName>
        <fullName evidence="1">Nucleoside diphosphate kinase</fullName>
        <shortName evidence="1">NDK</shortName>
        <shortName evidence="1">NDP kinase</shortName>
        <ecNumber evidence="1">2.7.4.6</ecNumber>
    </recommendedName>
    <alternativeName>
        <fullName evidence="1">Nucleoside-2-P kinase</fullName>
    </alternativeName>
</protein>
<feature type="chain" id="PRO_0000136961" description="Nucleoside diphosphate kinase">
    <location>
        <begin position="1"/>
        <end position="137"/>
    </location>
</feature>
<feature type="active site" description="Pros-phosphohistidine intermediate" evidence="1">
    <location>
        <position position="115"/>
    </location>
</feature>
<feature type="binding site" evidence="1">
    <location>
        <position position="9"/>
    </location>
    <ligand>
        <name>ATP</name>
        <dbReference type="ChEBI" id="CHEBI:30616"/>
    </ligand>
</feature>
<feature type="binding site" evidence="1">
    <location>
        <position position="57"/>
    </location>
    <ligand>
        <name>ATP</name>
        <dbReference type="ChEBI" id="CHEBI:30616"/>
    </ligand>
</feature>
<feature type="binding site" evidence="1">
    <location>
        <position position="85"/>
    </location>
    <ligand>
        <name>ATP</name>
        <dbReference type="ChEBI" id="CHEBI:30616"/>
    </ligand>
</feature>
<feature type="binding site" evidence="1">
    <location>
        <position position="91"/>
    </location>
    <ligand>
        <name>ATP</name>
        <dbReference type="ChEBI" id="CHEBI:30616"/>
    </ligand>
</feature>
<feature type="binding site" evidence="1">
    <location>
        <position position="102"/>
    </location>
    <ligand>
        <name>ATP</name>
        <dbReference type="ChEBI" id="CHEBI:30616"/>
    </ligand>
</feature>
<feature type="binding site" evidence="1">
    <location>
        <position position="112"/>
    </location>
    <ligand>
        <name>ATP</name>
        <dbReference type="ChEBI" id="CHEBI:30616"/>
    </ligand>
</feature>
<reference key="1">
    <citation type="journal article" date="2005" name="PLoS Biol.">
        <title>Major structural differences and novel potential virulence mechanisms from the genomes of multiple Campylobacter species.</title>
        <authorList>
            <person name="Fouts D.E."/>
            <person name="Mongodin E.F."/>
            <person name="Mandrell R.E."/>
            <person name="Miller W.G."/>
            <person name="Rasko D.A."/>
            <person name="Ravel J."/>
            <person name="Brinkac L.M."/>
            <person name="DeBoy R.T."/>
            <person name="Parker C.T."/>
            <person name="Daugherty S.C."/>
            <person name="Dodson R.J."/>
            <person name="Durkin A.S."/>
            <person name="Madupu R."/>
            <person name="Sullivan S.A."/>
            <person name="Shetty J.U."/>
            <person name="Ayodeji M.A."/>
            <person name="Shvartsbeyn A."/>
            <person name="Schatz M.C."/>
            <person name="Badger J.H."/>
            <person name="Fraser C.M."/>
            <person name="Nelson K.E."/>
        </authorList>
    </citation>
    <scope>NUCLEOTIDE SEQUENCE [LARGE SCALE GENOMIC DNA]</scope>
    <source>
        <strain>RM1221</strain>
    </source>
</reference>